<dbReference type="EC" id="1.1.1.282" evidence="1"/>
<dbReference type="EMBL" id="CP000247">
    <property type="protein sequence ID" value="ABG69642.1"/>
    <property type="molecule type" value="Genomic_DNA"/>
</dbReference>
<dbReference type="RefSeq" id="WP_000383457.1">
    <property type="nucleotide sequence ID" value="NC_008253.1"/>
</dbReference>
<dbReference type="SMR" id="Q0THD7"/>
<dbReference type="KEGG" id="ecp:ECP_1639"/>
<dbReference type="HOGENOM" id="CLU_044063_4_4_6"/>
<dbReference type="UniPathway" id="UPA00053">
    <property type="reaction ID" value="UER00087"/>
</dbReference>
<dbReference type="Proteomes" id="UP000009182">
    <property type="component" value="Chromosome"/>
</dbReference>
<dbReference type="GO" id="GO:0030266">
    <property type="term" value="F:quinate 3-dehydrogenase (NAD+) activity"/>
    <property type="evidence" value="ECO:0007669"/>
    <property type="project" value="UniProtKB-UniRule"/>
</dbReference>
<dbReference type="GO" id="GO:0052733">
    <property type="term" value="F:quinate 3-dehydrogenase (NADP+) activity"/>
    <property type="evidence" value="ECO:0007669"/>
    <property type="project" value="InterPro"/>
</dbReference>
<dbReference type="GO" id="GO:0052734">
    <property type="term" value="F:shikimate 3-dehydrogenase (NAD+) activity"/>
    <property type="evidence" value="ECO:0007669"/>
    <property type="project" value="InterPro"/>
</dbReference>
<dbReference type="GO" id="GO:0004764">
    <property type="term" value="F:shikimate 3-dehydrogenase (NADP+) activity"/>
    <property type="evidence" value="ECO:0007669"/>
    <property type="project" value="UniProtKB-UniRule"/>
</dbReference>
<dbReference type="GO" id="GO:0008652">
    <property type="term" value="P:amino acid biosynthetic process"/>
    <property type="evidence" value="ECO:0007669"/>
    <property type="project" value="UniProtKB-KW"/>
</dbReference>
<dbReference type="GO" id="GO:0009073">
    <property type="term" value="P:aromatic amino acid family biosynthetic process"/>
    <property type="evidence" value="ECO:0007669"/>
    <property type="project" value="UniProtKB-KW"/>
</dbReference>
<dbReference type="GO" id="GO:0009423">
    <property type="term" value="P:chorismate biosynthetic process"/>
    <property type="evidence" value="ECO:0007669"/>
    <property type="project" value="UniProtKB-UniRule"/>
</dbReference>
<dbReference type="GO" id="GO:0019632">
    <property type="term" value="P:shikimate metabolic process"/>
    <property type="evidence" value="ECO:0007669"/>
    <property type="project" value="TreeGrafter"/>
</dbReference>
<dbReference type="CDD" id="cd01065">
    <property type="entry name" value="NAD_bind_Shikimate_DH"/>
    <property type="match status" value="1"/>
</dbReference>
<dbReference type="FunFam" id="3.40.50.10860:FF:000004">
    <property type="entry name" value="Quinate/shikimate dehydrogenase"/>
    <property type="match status" value="1"/>
</dbReference>
<dbReference type="FunFam" id="3.40.50.720:FF:000086">
    <property type="entry name" value="Quinate/shikimate dehydrogenase"/>
    <property type="match status" value="1"/>
</dbReference>
<dbReference type="Gene3D" id="3.40.50.10860">
    <property type="entry name" value="Leucine Dehydrogenase, chain A, domain 1"/>
    <property type="match status" value="1"/>
</dbReference>
<dbReference type="Gene3D" id="3.40.50.720">
    <property type="entry name" value="NAD(P)-binding Rossmann-like Domain"/>
    <property type="match status" value="1"/>
</dbReference>
<dbReference type="HAMAP" id="MF_00222">
    <property type="entry name" value="Shikimate_DH_AroE"/>
    <property type="match status" value="1"/>
</dbReference>
<dbReference type="HAMAP" id="MF_01578">
    <property type="entry name" value="Shikimate_DH_YdiB"/>
    <property type="match status" value="1"/>
</dbReference>
<dbReference type="InterPro" id="IPR046346">
    <property type="entry name" value="Aminoacid_DH-like_N_sf"/>
</dbReference>
<dbReference type="InterPro" id="IPR036291">
    <property type="entry name" value="NAD(P)-bd_dom_sf"/>
</dbReference>
<dbReference type="InterPro" id="IPR022872">
    <property type="entry name" value="Quinate/Shikimate_DH"/>
</dbReference>
<dbReference type="InterPro" id="IPR041121">
    <property type="entry name" value="SDH_C"/>
</dbReference>
<dbReference type="InterPro" id="IPR013708">
    <property type="entry name" value="Shikimate_DH-bd_N"/>
</dbReference>
<dbReference type="InterPro" id="IPR022893">
    <property type="entry name" value="Shikimate_DH_fam"/>
</dbReference>
<dbReference type="NCBIfam" id="NF009390">
    <property type="entry name" value="PRK12749.1"/>
    <property type="match status" value="1"/>
</dbReference>
<dbReference type="PANTHER" id="PTHR21089:SF1">
    <property type="entry name" value="BIFUNCTIONAL 3-DEHYDROQUINATE DEHYDRATASE_SHIKIMATE DEHYDROGENASE, CHLOROPLASTIC"/>
    <property type="match status" value="1"/>
</dbReference>
<dbReference type="PANTHER" id="PTHR21089">
    <property type="entry name" value="SHIKIMATE DEHYDROGENASE"/>
    <property type="match status" value="1"/>
</dbReference>
<dbReference type="Pfam" id="PF18317">
    <property type="entry name" value="SDH_C"/>
    <property type="match status" value="1"/>
</dbReference>
<dbReference type="Pfam" id="PF08501">
    <property type="entry name" value="Shikimate_dh_N"/>
    <property type="match status" value="1"/>
</dbReference>
<dbReference type="SUPFAM" id="SSF53223">
    <property type="entry name" value="Aminoacid dehydrogenase-like, N-terminal domain"/>
    <property type="match status" value="1"/>
</dbReference>
<dbReference type="SUPFAM" id="SSF51735">
    <property type="entry name" value="NAD(P)-binding Rossmann-fold domains"/>
    <property type="match status" value="1"/>
</dbReference>
<evidence type="ECO:0000255" key="1">
    <source>
        <dbReference type="HAMAP-Rule" id="MF_01578"/>
    </source>
</evidence>
<accession>Q0THD7</accession>
<reference key="1">
    <citation type="journal article" date="2006" name="Mol. Microbiol.">
        <title>Role of pathogenicity island-associated integrases in the genome plasticity of uropathogenic Escherichia coli strain 536.</title>
        <authorList>
            <person name="Hochhut B."/>
            <person name="Wilde C."/>
            <person name="Balling G."/>
            <person name="Middendorf B."/>
            <person name="Dobrindt U."/>
            <person name="Brzuszkiewicz E."/>
            <person name="Gottschalk G."/>
            <person name="Carniel E."/>
            <person name="Hacker J."/>
        </authorList>
    </citation>
    <scope>NUCLEOTIDE SEQUENCE [LARGE SCALE GENOMIC DNA]</scope>
    <source>
        <strain>536 / UPEC</strain>
    </source>
</reference>
<organism>
    <name type="scientific">Escherichia coli O6:K15:H31 (strain 536 / UPEC)</name>
    <dbReference type="NCBI Taxonomy" id="362663"/>
    <lineage>
        <taxon>Bacteria</taxon>
        <taxon>Pseudomonadati</taxon>
        <taxon>Pseudomonadota</taxon>
        <taxon>Gammaproteobacteria</taxon>
        <taxon>Enterobacterales</taxon>
        <taxon>Enterobacteriaceae</taxon>
        <taxon>Escherichia</taxon>
    </lineage>
</organism>
<proteinExistence type="inferred from homology"/>
<sequence length="288" mass="31242">MDVTAKYELIGLMAYPIRHSLSPEMQNKALEKAGLPFTYMAFEVDNDSFPAAIEGLKALKMRGTGVSMPNKQLACEYVDELTPAAKLVGAINTIVNDDGYLRGYNTDGTGHIRAIKESGFDIKGKTMVLLGAGGASTAIGAQGAIEGLKEIKLFNRRDEFFDKALAFAQRVNENTDCVVTVTDLADQQAFAEALASADILTNGTKVGMKPLENESLVNDISLLHPGLLVTECVYNPHMTKLLQQAQQAGCKTIDGYGMLLWQGAEQFTLWTGKDFPLEYVKQVMGFGA</sequence>
<feature type="chain" id="PRO_0000280773" description="Quinate/shikimate dehydrogenase">
    <location>
        <begin position="1"/>
        <end position="288"/>
    </location>
</feature>
<feature type="binding site" evidence="1">
    <location>
        <position position="71"/>
    </location>
    <ligand>
        <name>substrate</name>
    </ligand>
</feature>
<feature type="binding site" evidence="1">
    <location>
        <position position="107"/>
    </location>
    <ligand>
        <name>substrate</name>
    </ligand>
</feature>
<feature type="binding site" evidence="1">
    <location>
        <begin position="132"/>
        <end position="135"/>
    </location>
    <ligand>
        <name>NAD(+)</name>
        <dbReference type="ChEBI" id="CHEBI:57540"/>
    </ligand>
</feature>
<feature type="binding site" evidence="1">
    <location>
        <begin position="155"/>
        <end position="158"/>
    </location>
    <ligand>
        <name>NAD(+)</name>
        <dbReference type="ChEBI" id="CHEBI:57540"/>
    </ligand>
</feature>
<feature type="binding site" evidence="1">
    <location>
        <position position="205"/>
    </location>
    <ligand>
        <name>NAD(+)</name>
        <dbReference type="ChEBI" id="CHEBI:57540"/>
    </ligand>
</feature>
<feature type="binding site" evidence="1">
    <location>
        <begin position="232"/>
        <end position="235"/>
    </location>
    <ligand>
        <name>NAD(+)</name>
        <dbReference type="ChEBI" id="CHEBI:57540"/>
    </ligand>
</feature>
<feature type="binding site" evidence="1">
    <location>
        <position position="255"/>
    </location>
    <ligand>
        <name>NAD(+)</name>
        <dbReference type="ChEBI" id="CHEBI:57540"/>
    </ligand>
</feature>
<name>YDIB_ECOL5</name>
<gene>
    <name evidence="1" type="primary">ydiB</name>
    <name type="ordered locus">ECP_1639</name>
</gene>
<comment type="function">
    <text evidence="1">The actual biological function of YdiB remains unclear, nor is it known whether 3-dehydroshikimate or quinate represents the natural substrate. Catalyzes the reversible NAD-dependent reduction of both 3-dehydroshikimate (DHSA) and 3-dehydroquinate to yield shikimate (SA) and quinate, respectively. It can use both NAD or NADP for catalysis, however it has higher catalytic efficiency with NAD.</text>
</comment>
<comment type="catalytic activity">
    <reaction evidence="1">
        <text>L-quinate + NAD(+) = 3-dehydroquinate + NADH + H(+)</text>
        <dbReference type="Rhea" id="RHEA:22364"/>
        <dbReference type="ChEBI" id="CHEBI:15378"/>
        <dbReference type="ChEBI" id="CHEBI:29751"/>
        <dbReference type="ChEBI" id="CHEBI:32364"/>
        <dbReference type="ChEBI" id="CHEBI:57540"/>
        <dbReference type="ChEBI" id="CHEBI:57945"/>
        <dbReference type="EC" id="1.1.1.282"/>
    </reaction>
</comment>
<comment type="catalytic activity">
    <reaction evidence="1">
        <text>L-quinate + NADP(+) = 3-dehydroquinate + NADPH + H(+)</text>
        <dbReference type="Rhea" id="RHEA:18425"/>
        <dbReference type="ChEBI" id="CHEBI:15378"/>
        <dbReference type="ChEBI" id="CHEBI:29751"/>
        <dbReference type="ChEBI" id="CHEBI:32364"/>
        <dbReference type="ChEBI" id="CHEBI:57783"/>
        <dbReference type="ChEBI" id="CHEBI:58349"/>
        <dbReference type="EC" id="1.1.1.282"/>
    </reaction>
</comment>
<comment type="catalytic activity">
    <reaction evidence="1">
        <text>shikimate + NADP(+) = 3-dehydroshikimate + NADPH + H(+)</text>
        <dbReference type="Rhea" id="RHEA:17737"/>
        <dbReference type="ChEBI" id="CHEBI:15378"/>
        <dbReference type="ChEBI" id="CHEBI:16630"/>
        <dbReference type="ChEBI" id="CHEBI:36208"/>
        <dbReference type="ChEBI" id="CHEBI:57783"/>
        <dbReference type="ChEBI" id="CHEBI:58349"/>
        <dbReference type="EC" id="1.1.1.282"/>
    </reaction>
</comment>
<comment type="catalytic activity">
    <reaction evidence="1">
        <text>shikimate + NAD(+) = 3-dehydroshikimate + NADH + H(+)</text>
        <dbReference type="Rhea" id="RHEA:17741"/>
        <dbReference type="ChEBI" id="CHEBI:15378"/>
        <dbReference type="ChEBI" id="CHEBI:16630"/>
        <dbReference type="ChEBI" id="CHEBI:36208"/>
        <dbReference type="ChEBI" id="CHEBI:57540"/>
        <dbReference type="ChEBI" id="CHEBI:57945"/>
        <dbReference type="EC" id="1.1.1.282"/>
    </reaction>
</comment>
<comment type="pathway">
    <text evidence="1">Metabolic intermediate biosynthesis; chorismate biosynthesis; chorismate from D-erythrose 4-phosphate and phosphoenolpyruvate: step 4/7.</text>
</comment>
<comment type="subunit">
    <text evidence="1">Homodimer.</text>
</comment>
<comment type="similarity">
    <text evidence="1">Belongs to the shikimate dehydrogenase family.</text>
</comment>
<protein>
    <recommendedName>
        <fullName evidence="1">Quinate/shikimate dehydrogenase</fullName>
        <ecNumber evidence="1">1.1.1.282</ecNumber>
    </recommendedName>
    <alternativeName>
        <fullName evidence="1">NAD-dependent shikimate 5-dehydrogenase</fullName>
    </alternativeName>
</protein>
<keyword id="KW-0028">Amino-acid biosynthesis</keyword>
<keyword id="KW-0057">Aromatic amino acid biosynthesis</keyword>
<keyword id="KW-0520">NAD</keyword>
<keyword id="KW-0521">NADP</keyword>
<keyword id="KW-0560">Oxidoreductase</keyword>